<sequence length="735" mass="82595">MKFDNHTYIQNYTSSDDETIVLINPLILNLFNKTNYDISQSNKQKDSIYHLDINIKTNSKLDKKSKKIDRNQDEVDELAKSKTKSKKKVQVEFETDDEYLNVFNKPKHFDIVEKNIRKTEILNEIKTINSATGKKNKKLLSRKKEEIVEDNQIPKELRINSSLTVQEFAELTCISDIEIIRTLFLKGQAVTVNQILDINTIIELGKDFHINIQIEEKNGLNEVNIEKNNFIKFSENTIRRAPIVTILGHVDHGKTTLLDKIRQTQIAQKEAGGITQKIAAYKVNVQYKNENRNIVFLDTPGHEAFSNMRSRGINVTDIVILLVAADDGVKPQTIEAINAIKAAKLPIIVAINKIDKDQANIEKVQQELSKYELIPESWGGQTPMIPISASQGTNIDSLLELILLMADIENYQAIEEDLASGTILESHIDRTRGPIASILVQNGTLKLGDIIVTGTSLGKIRGMLDSEGNKINTLTPSSPGIIWGLNKSLNSGDKFQTFSNEKDAKTYFSKESENNKKITYNYISENPSNQILEESSKKILNFILKTDTQGSIEAIVNAISRIKTKQLQIKILYSNLGEVTETDVEFASTTNAFVLAFNTRLAPGAKKTARQLNIDIREYNVVYDLVEDIESLIAQHSEPEYKKLKIGAATVKAVFPLGKNFVAGIIINEGKIVRSAHIQVQRKSGLVFEGDITTIKIVKKDVEEVSEGNECGLFIEEFSEWKVGDSIEIFELIQI</sequence>
<gene>
    <name type="primary">infB</name>
</gene>
<keyword id="KW-0150">Chloroplast</keyword>
<keyword id="KW-0342">GTP-binding</keyword>
<keyword id="KW-0396">Initiation factor</keyword>
<keyword id="KW-0547">Nucleotide-binding</keyword>
<keyword id="KW-0934">Plastid</keyword>
<keyword id="KW-0648">Protein biosynthesis</keyword>
<reference key="1">
    <citation type="journal article" date="1999" name="J. Mol. Evol.">
        <title>The plastid genome of the cryptophyte alga, Guillardia theta: complete sequence and conserved synteny groups confirm its common ancestry with red algae.</title>
        <authorList>
            <person name="Douglas S.E."/>
            <person name="Penny S.L."/>
        </authorList>
    </citation>
    <scope>NUCLEOTIDE SEQUENCE [LARGE SCALE GENOMIC DNA]</scope>
</reference>
<geneLocation type="chloroplast"/>
<feature type="chain" id="PRO_0000137291" description="Translation initiation factor IF-2, chloroplastic">
    <location>
        <begin position="1"/>
        <end position="735"/>
    </location>
</feature>
<feature type="domain" description="tr-type G">
    <location>
        <begin position="239"/>
        <end position="411"/>
    </location>
</feature>
<feature type="region of interest" description="G1" evidence="1">
    <location>
        <begin position="248"/>
        <end position="255"/>
    </location>
</feature>
<feature type="region of interest" description="G2" evidence="1">
    <location>
        <begin position="273"/>
        <end position="277"/>
    </location>
</feature>
<feature type="region of interest" description="G3" evidence="1">
    <location>
        <begin position="298"/>
        <end position="301"/>
    </location>
</feature>
<feature type="region of interest" description="G4" evidence="1">
    <location>
        <begin position="352"/>
        <end position="355"/>
    </location>
</feature>
<feature type="region of interest" description="G5" evidence="1">
    <location>
        <begin position="388"/>
        <end position="390"/>
    </location>
</feature>
<feature type="binding site" evidence="1">
    <location>
        <begin position="248"/>
        <end position="255"/>
    </location>
    <ligand>
        <name>GTP</name>
        <dbReference type="ChEBI" id="CHEBI:37565"/>
    </ligand>
</feature>
<feature type="binding site" evidence="1">
    <location>
        <begin position="298"/>
        <end position="302"/>
    </location>
    <ligand>
        <name>GTP</name>
        <dbReference type="ChEBI" id="CHEBI:37565"/>
    </ligand>
</feature>
<feature type="binding site" evidence="1">
    <location>
        <begin position="352"/>
        <end position="355"/>
    </location>
    <ligand>
        <name>GTP</name>
        <dbReference type="ChEBI" id="CHEBI:37565"/>
    </ligand>
</feature>
<protein>
    <recommendedName>
        <fullName>Translation initiation factor IF-2, chloroplastic</fullName>
    </recommendedName>
</protein>
<organism>
    <name type="scientific">Guillardia theta</name>
    <name type="common">Cryptophyte</name>
    <name type="synonym">Cryptomonas phi</name>
    <dbReference type="NCBI Taxonomy" id="55529"/>
    <lineage>
        <taxon>Eukaryota</taxon>
        <taxon>Cryptophyceae</taxon>
        <taxon>Pyrenomonadales</taxon>
        <taxon>Geminigeraceae</taxon>
        <taxon>Guillardia</taxon>
    </lineage>
</organism>
<name>IF2C_GUITH</name>
<evidence type="ECO:0000250" key="1"/>
<evidence type="ECO:0000305" key="2"/>
<proteinExistence type="inferred from homology"/>
<dbReference type="EMBL" id="AF041468">
    <property type="protein sequence ID" value="AAC35680.1"/>
    <property type="molecule type" value="Genomic_DNA"/>
</dbReference>
<dbReference type="RefSeq" id="NP_050746.1">
    <property type="nucleotide sequence ID" value="NC_000926.1"/>
</dbReference>
<dbReference type="SMR" id="O78489"/>
<dbReference type="GeneID" id="857051"/>
<dbReference type="HOGENOM" id="CLU_006301_5_2_1"/>
<dbReference type="OMA" id="RKNPWMN"/>
<dbReference type="GO" id="GO:0009507">
    <property type="term" value="C:chloroplast"/>
    <property type="evidence" value="ECO:0007669"/>
    <property type="project" value="UniProtKB-SubCell"/>
</dbReference>
<dbReference type="GO" id="GO:0005829">
    <property type="term" value="C:cytosol"/>
    <property type="evidence" value="ECO:0007669"/>
    <property type="project" value="TreeGrafter"/>
</dbReference>
<dbReference type="GO" id="GO:0005525">
    <property type="term" value="F:GTP binding"/>
    <property type="evidence" value="ECO:0007669"/>
    <property type="project" value="UniProtKB-KW"/>
</dbReference>
<dbReference type="GO" id="GO:0003924">
    <property type="term" value="F:GTPase activity"/>
    <property type="evidence" value="ECO:0007669"/>
    <property type="project" value="UniProtKB-UniRule"/>
</dbReference>
<dbReference type="GO" id="GO:0003743">
    <property type="term" value="F:translation initiation factor activity"/>
    <property type="evidence" value="ECO:0007669"/>
    <property type="project" value="UniProtKB-UniRule"/>
</dbReference>
<dbReference type="CDD" id="cd01887">
    <property type="entry name" value="IF2_eIF5B"/>
    <property type="match status" value="1"/>
</dbReference>
<dbReference type="CDD" id="cd03702">
    <property type="entry name" value="IF2_mtIF2_II"/>
    <property type="match status" value="1"/>
</dbReference>
<dbReference type="CDD" id="cd03692">
    <property type="entry name" value="mtIF2_IVc"/>
    <property type="match status" value="1"/>
</dbReference>
<dbReference type="FunFam" id="2.40.30.10:FF:000008">
    <property type="entry name" value="Translation initiation factor IF-2"/>
    <property type="match status" value="1"/>
</dbReference>
<dbReference type="FunFam" id="3.40.50.10050:FF:000001">
    <property type="entry name" value="Translation initiation factor IF-2"/>
    <property type="match status" value="1"/>
</dbReference>
<dbReference type="FunFam" id="3.40.50.300:FF:000019">
    <property type="entry name" value="Translation initiation factor IF-2"/>
    <property type="match status" value="1"/>
</dbReference>
<dbReference type="Gene3D" id="3.40.50.300">
    <property type="entry name" value="P-loop containing nucleotide triphosphate hydrolases"/>
    <property type="match status" value="1"/>
</dbReference>
<dbReference type="Gene3D" id="2.40.30.10">
    <property type="entry name" value="Translation factors"/>
    <property type="match status" value="2"/>
</dbReference>
<dbReference type="Gene3D" id="3.40.50.10050">
    <property type="entry name" value="Translation initiation factor IF- 2, domain 3"/>
    <property type="match status" value="1"/>
</dbReference>
<dbReference type="HAMAP" id="MF_00100_B">
    <property type="entry name" value="IF_2_B"/>
    <property type="match status" value="1"/>
</dbReference>
<dbReference type="InterPro" id="IPR053905">
    <property type="entry name" value="EF-G-like_DII"/>
</dbReference>
<dbReference type="InterPro" id="IPR044145">
    <property type="entry name" value="IF2_II"/>
</dbReference>
<dbReference type="InterPro" id="IPR006847">
    <property type="entry name" value="IF2_N"/>
</dbReference>
<dbReference type="InterPro" id="IPR027417">
    <property type="entry name" value="P-loop_NTPase"/>
</dbReference>
<dbReference type="InterPro" id="IPR005225">
    <property type="entry name" value="Small_GTP-bd"/>
</dbReference>
<dbReference type="InterPro" id="IPR000795">
    <property type="entry name" value="T_Tr_GTP-bd_dom"/>
</dbReference>
<dbReference type="InterPro" id="IPR000178">
    <property type="entry name" value="TF_IF2_bacterial-like"/>
</dbReference>
<dbReference type="InterPro" id="IPR015760">
    <property type="entry name" value="TIF_IF2"/>
</dbReference>
<dbReference type="InterPro" id="IPR023115">
    <property type="entry name" value="TIF_IF2_dom3"/>
</dbReference>
<dbReference type="InterPro" id="IPR036925">
    <property type="entry name" value="TIF_IF2_dom3_sf"/>
</dbReference>
<dbReference type="InterPro" id="IPR009000">
    <property type="entry name" value="Transl_B-barrel_sf"/>
</dbReference>
<dbReference type="NCBIfam" id="TIGR00487">
    <property type="entry name" value="IF-2"/>
    <property type="match status" value="1"/>
</dbReference>
<dbReference type="NCBIfam" id="TIGR00231">
    <property type="entry name" value="small_GTP"/>
    <property type="match status" value="1"/>
</dbReference>
<dbReference type="PANTHER" id="PTHR43381:SF5">
    <property type="entry name" value="TR-TYPE G DOMAIN-CONTAINING PROTEIN"/>
    <property type="match status" value="1"/>
</dbReference>
<dbReference type="PANTHER" id="PTHR43381">
    <property type="entry name" value="TRANSLATION INITIATION FACTOR IF-2-RELATED"/>
    <property type="match status" value="1"/>
</dbReference>
<dbReference type="Pfam" id="PF22042">
    <property type="entry name" value="EF-G_D2"/>
    <property type="match status" value="1"/>
</dbReference>
<dbReference type="Pfam" id="PF00009">
    <property type="entry name" value="GTP_EFTU"/>
    <property type="match status" value="1"/>
</dbReference>
<dbReference type="Pfam" id="PF11987">
    <property type="entry name" value="IF-2"/>
    <property type="match status" value="1"/>
</dbReference>
<dbReference type="Pfam" id="PF04760">
    <property type="entry name" value="IF2_N"/>
    <property type="match status" value="1"/>
</dbReference>
<dbReference type="PRINTS" id="PR00315">
    <property type="entry name" value="ELONGATNFCT"/>
</dbReference>
<dbReference type="SUPFAM" id="SSF52156">
    <property type="entry name" value="Initiation factor IF2/eIF5b, domain 3"/>
    <property type="match status" value="1"/>
</dbReference>
<dbReference type="SUPFAM" id="SSF52540">
    <property type="entry name" value="P-loop containing nucleoside triphosphate hydrolases"/>
    <property type="match status" value="1"/>
</dbReference>
<dbReference type="SUPFAM" id="SSF50447">
    <property type="entry name" value="Translation proteins"/>
    <property type="match status" value="2"/>
</dbReference>
<dbReference type="PROSITE" id="PS51722">
    <property type="entry name" value="G_TR_2"/>
    <property type="match status" value="1"/>
</dbReference>
<accession>O78489</accession>
<comment type="function">
    <text evidence="1">One of the essential components for the initiation of protein synthesis. Protects formylmethionyl-tRNA from spontaneous hydrolysis and promotes its binding to the 30S ribosomal subunits. Also involved in the hydrolysis of GTP during the formation of the 70S ribosomal complex (By similarity).</text>
</comment>
<comment type="subcellular location">
    <subcellularLocation>
        <location>Plastid</location>
        <location>Chloroplast</location>
    </subcellularLocation>
</comment>
<comment type="similarity">
    <text evidence="2">Belongs to the TRAFAC class translation factor GTPase superfamily. Classic translation factor GTPase family. IF-2 subfamily.</text>
</comment>